<accession>A5ERV2</accession>
<dbReference type="EC" id="3.5.1.5" evidence="1"/>
<dbReference type="EMBL" id="CP000494">
    <property type="protein sequence ID" value="ABQ38896.1"/>
    <property type="molecule type" value="Genomic_DNA"/>
</dbReference>
<dbReference type="RefSeq" id="WP_006612145.1">
    <property type="nucleotide sequence ID" value="NC_009485.1"/>
</dbReference>
<dbReference type="SMR" id="A5ERV2"/>
<dbReference type="STRING" id="288000.BBta_7011"/>
<dbReference type="KEGG" id="bbt:BBta_7011"/>
<dbReference type="eggNOG" id="COG0832">
    <property type="taxonomic scope" value="Bacteria"/>
</dbReference>
<dbReference type="HOGENOM" id="CLU_129707_1_1_5"/>
<dbReference type="OrthoDB" id="9797217at2"/>
<dbReference type="UniPathway" id="UPA00258">
    <property type="reaction ID" value="UER00370"/>
</dbReference>
<dbReference type="Proteomes" id="UP000000246">
    <property type="component" value="Chromosome"/>
</dbReference>
<dbReference type="GO" id="GO:0035550">
    <property type="term" value="C:urease complex"/>
    <property type="evidence" value="ECO:0007669"/>
    <property type="project" value="InterPro"/>
</dbReference>
<dbReference type="GO" id="GO:0009039">
    <property type="term" value="F:urease activity"/>
    <property type="evidence" value="ECO:0007669"/>
    <property type="project" value="UniProtKB-UniRule"/>
</dbReference>
<dbReference type="GO" id="GO:0043419">
    <property type="term" value="P:urea catabolic process"/>
    <property type="evidence" value="ECO:0007669"/>
    <property type="project" value="UniProtKB-UniRule"/>
</dbReference>
<dbReference type="CDD" id="cd00407">
    <property type="entry name" value="Urease_beta"/>
    <property type="match status" value="1"/>
</dbReference>
<dbReference type="FunFam" id="2.10.150.10:FF:000001">
    <property type="entry name" value="Urease subunit beta"/>
    <property type="match status" value="1"/>
</dbReference>
<dbReference type="Gene3D" id="2.10.150.10">
    <property type="entry name" value="Urease, beta subunit"/>
    <property type="match status" value="1"/>
</dbReference>
<dbReference type="HAMAP" id="MF_01954">
    <property type="entry name" value="Urease_beta"/>
    <property type="match status" value="1"/>
</dbReference>
<dbReference type="InterPro" id="IPR002019">
    <property type="entry name" value="Urease_beta-like"/>
</dbReference>
<dbReference type="InterPro" id="IPR036461">
    <property type="entry name" value="Urease_betasu_sf"/>
</dbReference>
<dbReference type="InterPro" id="IPR050069">
    <property type="entry name" value="Urease_subunit"/>
</dbReference>
<dbReference type="NCBIfam" id="NF009682">
    <property type="entry name" value="PRK13203.1"/>
    <property type="match status" value="1"/>
</dbReference>
<dbReference type="NCBIfam" id="TIGR00192">
    <property type="entry name" value="urease_beta"/>
    <property type="match status" value="1"/>
</dbReference>
<dbReference type="PANTHER" id="PTHR33569">
    <property type="entry name" value="UREASE"/>
    <property type="match status" value="1"/>
</dbReference>
<dbReference type="PANTHER" id="PTHR33569:SF1">
    <property type="entry name" value="UREASE"/>
    <property type="match status" value="1"/>
</dbReference>
<dbReference type="Pfam" id="PF00699">
    <property type="entry name" value="Urease_beta"/>
    <property type="match status" value="1"/>
</dbReference>
<dbReference type="SUPFAM" id="SSF51278">
    <property type="entry name" value="Urease, beta-subunit"/>
    <property type="match status" value="1"/>
</dbReference>
<reference key="1">
    <citation type="journal article" date="2007" name="Science">
        <title>Legumes symbioses: absence of nod genes in photosynthetic bradyrhizobia.</title>
        <authorList>
            <person name="Giraud E."/>
            <person name="Moulin L."/>
            <person name="Vallenet D."/>
            <person name="Barbe V."/>
            <person name="Cytryn E."/>
            <person name="Avarre J.-C."/>
            <person name="Jaubert M."/>
            <person name="Simon D."/>
            <person name="Cartieaux F."/>
            <person name="Prin Y."/>
            <person name="Bena G."/>
            <person name="Hannibal L."/>
            <person name="Fardoux J."/>
            <person name="Kojadinovic M."/>
            <person name="Vuillet L."/>
            <person name="Lajus A."/>
            <person name="Cruveiller S."/>
            <person name="Rouy Z."/>
            <person name="Mangenot S."/>
            <person name="Segurens B."/>
            <person name="Dossat C."/>
            <person name="Franck W.L."/>
            <person name="Chang W.-S."/>
            <person name="Saunders E."/>
            <person name="Bruce D."/>
            <person name="Richardson P."/>
            <person name="Normand P."/>
            <person name="Dreyfus B."/>
            <person name="Pignol D."/>
            <person name="Stacey G."/>
            <person name="Emerich D."/>
            <person name="Vermeglio A."/>
            <person name="Medigue C."/>
            <person name="Sadowsky M."/>
        </authorList>
    </citation>
    <scope>NUCLEOTIDE SEQUENCE [LARGE SCALE GENOMIC DNA]</scope>
    <source>
        <strain>BTAi1 / ATCC BAA-1182</strain>
    </source>
</reference>
<evidence type="ECO:0000255" key="1">
    <source>
        <dbReference type="HAMAP-Rule" id="MF_01954"/>
    </source>
</evidence>
<protein>
    <recommendedName>
        <fullName evidence="1">Urease subunit beta</fullName>
        <ecNumber evidence="1">3.5.1.5</ecNumber>
    </recommendedName>
    <alternativeName>
        <fullName evidence="1">Urea amidohydrolase subunit beta</fullName>
    </alternativeName>
</protein>
<organism>
    <name type="scientific">Bradyrhizobium sp. (strain BTAi1 / ATCC BAA-1182)</name>
    <dbReference type="NCBI Taxonomy" id="288000"/>
    <lineage>
        <taxon>Bacteria</taxon>
        <taxon>Pseudomonadati</taxon>
        <taxon>Pseudomonadota</taxon>
        <taxon>Alphaproteobacteria</taxon>
        <taxon>Hyphomicrobiales</taxon>
        <taxon>Nitrobacteraceae</taxon>
        <taxon>Bradyrhizobium</taxon>
    </lineage>
</organism>
<proteinExistence type="inferred from homology"/>
<comment type="catalytic activity">
    <reaction evidence="1">
        <text>urea + 2 H2O + H(+) = hydrogencarbonate + 2 NH4(+)</text>
        <dbReference type="Rhea" id="RHEA:20557"/>
        <dbReference type="ChEBI" id="CHEBI:15377"/>
        <dbReference type="ChEBI" id="CHEBI:15378"/>
        <dbReference type="ChEBI" id="CHEBI:16199"/>
        <dbReference type="ChEBI" id="CHEBI:17544"/>
        <dbReference type="ChEBI" id="CHEBI:28938"/>
        <dbReference type="EC" id="3.5.1.5"/>
    </reaction>
</comment>
<comment type="pathway">
    <text evidence="1">Nitrogen metabolism; urea degradation; CO(2) and NH(3) from urea (urease route): step 1/1.</text>
</comment>
<comment type="subunit">
    <text evidence="1">Heterotrimer of UreA (gamma), UreB (beta) and UreC (alpha) subunits. Three heterotrimers associate to form the active enzyme.</text>
</comment>
<comment type="subcellular location">
    <subcellularLocation>
        <location evidence="1">Cytoplasm</location>
    </subcellularLocation>
</comment>
<comment type="similarity">
    <text evidence="1">Belongs to the urease beta subunit family.</text>
</comment>
<gene>
    <name evidence="1" type="primary">ureB</name>
    <name type="ordered locus">BBta_7011</name>
</gene>
<feature type="chain" id="PRO_1000070717" description="Urease subunit beta">
    <location>
        <begin position="1"/>
        <end position="101"/>
    </location>
</feature>
<name>URE2_BRASB</name>
<sequence>MIPGELFIQDGEIELNAGRKTVTLSVANTGDRPIQVGSHYHFFETNPALKFDRKKARGMRLDIAAGTAVRFEPGQTRDVQLVALAGKRMVYGFRGDVMGKL</sequence>
<keyword id="KW-0963">Cytoplasm</keyword>
<keyword id="KW-0378">Hydrolase</keyword>
<keyword id="KW-1185">Reference proteome</keyword>